<feature type="chain" id="PRO_1000189922" description="Probable GTP-binding protein EngB">
    <location>
        <begin position="1"/>
        <end position="207"/>
    </location>
</feature>
<feature type="domain" description="EngB-type G" evidence="1">
    <location>
        <begin position="22"/>
        <end position="194"/>
    </location>
</feature>
<feature type="binding site" evidence="1">
    <location>
        <begin position="30"/>
        <end position="37"/>
    </location>
    <ligand>
        <name>GTP</name>
        <dbReference type="ChEBI" id="CHEBI:37565"/>
    </ligand>
</feature>
<feature type="binding site" evidence="1">
    <location>
        <position position="37"/>
    </location>
    <ligand>
        <name>Mg(2+)</name>
        <dbReference type="ChEBI" id="CHEBI:18420"/>
    </ligand>
</feature>
<feature type="binding site" evidence="1">
    <location>
        <begin position="57"/>
        <end position="61"/>
    </location>
    <ligand>
        <name>GTP</name>
        <dbReference type="ChEBI" id="CHEBI:37565"/>
    </ligand>
</feature>
<feature type="binding site" evidence="1">
    <location>
        <position position="59"/>
    </location>
    <ligand>
        <name>Mg(2+)</name>
        <dbReference type="ChEBI" id="CHEBI:18420"/>
    </ligand>
</feature>
<feature type="binding site" evidence="1">
    <location>
        <begin position="75"/>
        <end position="78"/>
    </location>
    <ligand>
        <name>GTP</name>
        <dbReference type="ChEBI" id="CHEBI:37565"/>
    </ligand>
</feature>
<feature type="binding site" evidence="1">
    <location>
        <begin position="142"/>
        <end position="145"/>
    </location>
    <ligand>
        <name>GTP</name>
        <dbReference type="ChEBI" id="CHEBI:37565"/>
    </ligand>
</feature>
<feature type="binding site" evidence="1">
    <location>
        <begin position="173"/>
        <end position="175"/>
    </location>
    <ligand>
        <name>GTP</name>
        <dbReference type="ChEBI" id="CHEBI:37565"/>
    </ligand>
</feature>
<sequence length="207" mass="23081">MLIKYVEFIKSATRAAHYPPGDLPEIAFAGRSNVGKSSLINVLVNRKSLVRTSSTPGRTQLINFFDVNGQFTLVDLPGYGFAKVPLAVKKQWGPMMENYLAKRANLRGVILILDIRRTPVAEDIQMLHWLQAYSIKPILVITKCDKVSKNERGKQSRIIAQTLGVETEELNFFSALNREGKDLIWRRIEEVLPAETAGSAGEAPKAT</sequence>
<protein>
    <recommendedName>
        <fullName evidence="1">Probable GTP-binding protein EngB</fullName>
    </recommendedName>
</protein>
<keyword id="KW-0131">Cell cycle</keyword>
<keyword id="KW-0132">Cell division</keyword>
<keyword id="KW-0342">GTP-binding</keyword>
<keyword id="KW-0460">Magnesium</keyword>
<keyword id="KW-0479">Metal-binding</keyword>
<keyword id="KW-0547">Nucleotide-binding</keyword>
<keyword id="KW-1185">Reference proteome</keyword>
<keyword id="KW-0717">Septation</keyword>
<name>ENGB_GEODF</name>
<gene>
    <name evidence="1" type="primary">engB</name>
    <name type="ordered locus">Geob_0537</name>
</gene>
<organism>
    <name type="scientific">Geotalea daltonii (strain DSM 22248 / JCM 15807 / FRC-32)</name>
    <name type="common">Geobacter daltonii</name>
    <dbReference type="NCBI Taxonomy" id="316067"/>
    <lineage>
        <taxon>Bacteria</taxon>
        <taxon>Pseudomonadati</taxon>
        <taxon>Thermodesulfobacteriota</taxon>
        <taxon>Desulfuromonadia</taxon>
        <taxon>Geobacterales</taxon>
        <taxon>Geobacteraceae</taxon>
        <taxon>Geotalea</taxon>
    </lineage>
</organism>
<comment type="function">
    <text evidence="1">Necessary for normal cell division and for the maintenance of normal septation.</text>
</comment>
<comment type="cofactor">
    <cofactor evidence="1">
        <name>Mg(2+)</name>
        <dbReference type="ChEBI" id="CHEBI:18420"/>
    </cofactor>
</comment>
<comment type="similarity">
    <text evidence="1">Belongs to the TRAFAC class TrmE-Era-EngA-EngB-Septin-like GTPase superfamily. EngB GTPase family.</text>
</comment>
<accession>B9LZU0</accession>
<dbReference type="EMBL" id="CP001390">
    <property type="protein sequence ID" value="ACM18904.1"/>
    <property type="molecule type" value="Genomic_DNA"/>
</dbReference>
<dbReference type="RefSeq" id="WP_012645633.1">
    <property type="nucleotide sequence ID" value="NC_011979.1"/>
</dbReference>
<dbReference type="SMR" id="B9LZU0"/>
<dbReference type="STRING" id="316067.Geob_0537"/>
<dbReference type="KEGG" id="geo:Geob_0537"/>
<dbReference type="eggNOG" id="COG0218">
    <property type="taxonomic scope" value="Bacteria"/>
</dbReference>
<dbReference type="HOGENOM" id="CLU_033732_3_0_7"/>
<dbReference type="OrthoDB" id="9804921at2"/>
<dbReference type="Proteomes" id="UP000007721">
    <property type="component" value="Chromosome"/>
</dbReference>
<dbReference type="GO" id="GO:0005829">
    <property type="term" value="C:cytosol"/>
    <property type="evidence" value="ECO:0007669"/>
    <property type="project" value="TreeGrafter"/>
</dbReference>
<dbReference type="GO" id="GO:0005525">
    <property type="term" value="F:GTP binding"/>
    <property type="evidence" value="ECO:0007669"/>
    <property type="project" value="UniProtKB-UniRule"/>
</dbReference>
<dbReference type="GO" id="GO:0046872">
    <property type="term" value="F:metal ion binding"/>
    <property type="evidence" value="ECO:0007669"/>
    <property type="project" value="UniProtKB-KW"/>
</dbReference>
<dbReference type="GO" id="GO:0000917">
    <property type="term" value="P:division septum assembly"/>
    <property type="evidence" value="ECO:0007669"/>
    <property type="project" value="UniProtKB-KW"/>
</dbReference>
<dbReference type="CDD" id="cd01876">
    <property type="entry name" value="YihA_EngB"/>
    <property type="match status" value="1"/>
</dbReference>
<dbReference type="FunFam" id="3.40.50.300:FF:000098">
    <property type="entry name" value="Probable GTP-binding protein EngB"/>
    <property type="match status" value="1"/>
</dbReference>
<dbReference type="Gene3D" id="3.40.50.300">
    <property type="entry name" value="P-loop containing nucleotide triphosphate hydrolases"/>
    <property type="match status" value="1"/>
</dbReference>
<dbReference type="HAMAP" id="MF_00321">
    <property type="entry name" value="GTPase_EngB"/>
    <property type="match status" value="1"/>
</dbReference>
<dbReference type="InterPro" id="IPR030393">
    <property type="entry name" value="G_ENGB_dom"/>
</dbReference>
<dbReference type="InterPro" id="IPR006073">
    <property type="entry name" value="GTP-bd"/>
</dbReference>
<dbReference type="InterPro" id="IPR019987">
    <property type="entry name" value="GTP-bd_ribosome_bio_YsxC"/>
</dbReference>
<dbReference type="InterPro" id="IPR027417">
    <property type="entry name" value="P-loop_NTPase"/>
</dbReference>
<dbReference type="InterPro" id="IPR005225">
    <property type="entry name" value="Small_GTP-bd"/>
</dbReference>
<dbReference type="NCBIfam" id="TIGR03598">
    <property type="entry name" value="GTPase_YsxC"/>
    <property type="match status" value="1"/>
</dbReference>
<dbReference type="NCBIfam" id="TIGR00231">
    <property type="entry name" value="small_GTP"/>
    <property type="match status" value="1"/>
</dbReference>
<dbReference type="PANTHER" id="PTHR11649:SF13">
    <property type="entry name" value="ENGB-TYPE G DOMAIN-CONTAINING PROTEIN"/>
    <property type="match status" value="1"/>
</dbReference>
<dbReference type="PANTHER" id="PTHR11649">
    <property type="entry name" value="MSS1/TRME-RELATED GTP-BINDING PROTEIN"/>
    <property type="match status" value="1"/>
</dbReference>
<dbReference type="Pfam" id="PF01926">
    <property type="entry name" value="MMR_HSR1"/>
    <property type="match status" value="1"/>
</dbReference>
<dbReference type="SUPFAM" id="SSF52540">
    <property type="entry name" value="P-loop containing nucleoside triphosphate hydrolases"/>
    <property type="match status" value="1"/>
</dbReference>
<dbReference type="PROSITE" id="PS51706">
    <property type="entry name" value="G_ENGB"/>
    <property type="match status" value="1"/>
</dbReference>
<proteinExistence type="inferred from homology"/>
<evidence type="ECO:0000255" key="1">
    <source>
        <dbReference type="HAMAP-Rule" id="MF_00321"/>
    </source>
</evidence>
<reference key="1">
    <citation type="submission" date="2009-01" db="EMBL/GenBank/DDBJ databases">
        <title>Complete sequence of Geobacter sp. FRC-32.</title>
        <authorList>
            <consortium name="US DOE Joint Genome Institute"/>
            <person name="Lucas S."/>
            <person name="Copeland A."/>
            <person name="Lapidus A."/>
            <person name="Glavina del Rio T."/>
            <person name="Dalin E."/>
            <person name="Tice H."/>
            <person name="Bruce D."/>
            <person name="Goodwin L."/>
            <person name="Pitluck S."/>
            <person name="Saunders E."/>
            <person name="Brettin T."/>
            <person name="Detter J.C."/>
            <person name="Han C."/>
            <person name="Larimer F."/>
            <person name="Land M."/>
            <person name="Hauser L."/>
            <person name="Kyrpides N."/>
            <person name="Ovchinnikova G."/>
            <person name="Kostka J."/>
            <person name="Richardson P."/>
        </authorList>
    </citation>
    <scope>NUCLEOTIDE SEQUENCE [LARGE SCALE GENOMIC DNA]</scope>
    <source>
        <strain>DSM 22248 / JCM 15807 / FRC-32</strain>
    </source>
</reference>